<reference key="1">
    <citation type="journal article" date="1994" name="Curr. Top. Microbiol. Immunol.">
        <title>Primer-directed sequencing of human papillomavirus types.</title>
        <authorList>
            <person name="Delius H."/>
            <person name="Hofmann B."/>
        </authorList>
    </citation>
    <scope>NUCLEOTIDE SEQUENCE [GENOMIC DNA]</scope>
    <source>
        <strain>Isolate 35H</strain>
    </source>
</reference>
<reference key="2">
    <citation type="journal article" date="1992" name="Virology">
        <title>The phylogenetic relationship and complete nucleotide sequence of human papillomavirus type 35.</title>
        <authorList>
            <person name="Marich J.E."/>
            <person name="Pontsler A.V."/>
            <person name="Rice S.M."/>
            <person name="McGraw K.A."/>
            <person name="Dubensky T.W."/>
        </authorList>
    </citation>
    <scope>NUCLEOTIDE SEQUENCE [GENOMIC DNA]</scope>
</reference>
<accession>P27234</accession>
<evidence type="ECO:0000255" key="1">
    <source>
        <dbReference type="HAMAP-Rule" id="MF_04003"/>
    </source>
</evidence>
<evidence type="ECO:0000305" key="2"/>
<comment type="function">
    <text evidence="1">Minor protein of the capsid that localizes along the inner surface of the virion, within the central cavities beneath the L1 pentamers. Plays a role in capsid stabilization through interaction with the major capsid protein L1. Once the virion enters the host cell, L2 escorts the genomic DNA into the nucleus by promoting escape from the endosomal compartments and traffic through the host Golgi network. Mechanistically, the C-terminus of L2 possesses a cell-penetrating peptide that protudes from the host endosome, interacts with host cytoplasmic retromer cargo and thereby mediates the capsid delivery to the host trans-Golgi network. Plays a role through its interaction with host dynein in the intracellular microtubule-dependent transport of viral capsid toward the nucleus. Mediates the viral genome import into the nucleus through binding to host importins. Once within the nucleus, L2 localizes viral genomes to host PML bodies in order to activate early gene expression for establishment of infection. Later on, promotes late gene expression by interacting with the viral E2 protein and by inhibiting its transcriptional activation functions. During virion assembly, encapsidates the genome by direct interaction with the viral DNA.</text>
</comment>
<comment type="subunit">
    <text evidence="1">Interacts with major capsid protein L1. Interacts with E2; this interaction inhibits E2 transcriptional activity but not the DNA replication function E2. Interacts with host GADD45GIP1. Interacts with host HSPA8; this interaction is required for L2 nuclear translocation. Interacts with host importins KPNB2 and KPNB3. Forms a complex with importin alpha2-beta1 heterodimers via interaction with the importin alpha2 adapter. Interacts with host DYNLT1; this interaction is essential for virus intracellular transport during entry. Interacts (via C-terminus) with host retromer subunits VPS35 and VPS29.</text>
</comment>
<comment type="subcellular location">
    <subcellularLocation>
        <location evidence="1">Virion</location>
    </subcellularLocation>
    <subcellularLocation>
        <location evidence="1">Host nucleus</location>
    </subcellularLocation>
    <subcellularLocation>
        <location evidence="1">Host early endosome</location>
    </subcellularLocation>
    <subcellularLocation>
        <location evidence="1">Host Golgi apparatus</location>
    </subcellularLocation>
</comment>
<comment type="PTM">
    <text evidence="1">Highly phosphorylated.</text>
</comment>
<comment type="similarity">
    <text evidence="1">Belongs to the papillomaviridae L2 protein family.</text>
</comment>
<keyword id="KW-0167">Capsid protein</keyword>
<keyword id="KW-1176">Cytoplasmic inwards viral transport</keyword>
<keyword id="KW-1015">Disulfide bond</keyword>
<keyword id="KW-0238">DNA-binding</keyword>
<keyword id="KW-1039">Host endosome</keyword>
<keyword id="KW-1040">Host Golgi apparatus</keyword>
<keyword id="KW-1048">Host nucleus</keyword>
<keyword id="KW-0945">Host-virus interaction</keyword>
<keyword id="KW-0426">Late protein</keyword>
<keyword id="KW-1177">Microtubular inwards viral transport</keyword>
<keyword id="KW-0597">Phosphoprotein</keyword>
<keyword id="KW-1185">Reference proteome</keyword>
<keyword id="KW-1163">Viral penetration into host nucleus</keyword>
<keyword id="KW-0946">Virion</keyword>
<keyword id="KW-1160">Virus entry into host cell</keyword>
<organism>
    <name type="scientific">Human papillomavirus 35</name>
    <dbReference type="NCBI Taxonomy" id="10587"/>
    <lineage>
        <taxon>Viruses</taxon>
        <taxon>Monodnaviria</taxon>
        <taxon>Shotokuvirae</taxon>
        <taxon>Cossaviricota</taxon>
        <taxon>Papovaviricetes</taxon>
        <taxon>Zurhausenvirales</taxon>
        <taxon>Papillomaviridae</taxon>
        <taxon>Firstpapillomavirinae</taxon>
        <taxon>Alphapapillomavirus</taxon>
        <taxon>Alphapapillomavirus 9</taxon>
    </lineage>
</organism>
<dbReference type="EMBL" id="X74477">
    <property type="protein sequence ID" value="CAA52565.1"/>
    <property type="molecule type" value="Genomic_DNA"/>
</dbReference>
<dbReference type="EMBL" id="M74117">
    <property type="protein sequence ID" value="AAA46971.1"/>
    <property type="molecule type" value="Genomic_DNA"/>
</dbReference>
<dbReference type="PIR" id="H40824">
    <property type="entry name" value="P2WL35"/>
</dbReference>
<dbReference type="PIR" id="S36525">
    <property type="entry name" value="S36525"/>
</dbReference>
<dbReference type="Proteomes" id="UP000007711">
    <property type="component" value="Segment"/>
</dbReference>
<dbReference type="Proteomes" id="UP000113298">
    <property type="component" value="Genome"/>
</dbReference>
<dbReference type="GO" id="GO:0043657">
    <property type="term" value="C:host cell"/>
    <property type="evidence" value="ECO:0007669"/>
    <property type="project" value="GOC"/>
</dbReference>
<dbReference type="GO" id="GO:0044174">
    <property type="term" value="C:host cell endosome"/>
    <property type="evidence" value="ECO:0007669"/>
    <property type="project" value="UniProtKB-KW"/>
</dbReference>
<dbReference type="GO" id="GO:0044177">
    <property type="term" value="C:host cell Golgi apparatus"/>
    <property type="evidence" value="ECO:0007669"/>
    <property type="project" value="UniProtKB-SubCell"/>
</dbReference>
<dbReference type="GO" id="GO:0042025">
    <property type="term" value="C:host cell nucleus"/>
    <property type="evidence" value="ECO:0007669"/>
    <property type="project" value="UniProtKB-SubCell"/>
</dbReference>
<dbReference type="GO" id="GO:0019028">
    <property type="term" value="C:viral capsid"/>
    <property type="evidence" value="ECO:0007669"/>
    <property type="project" value="UniProtKB-UniRule"/>
</dbReference>
<dbReference type="GO" id="GO:0003677">
    <property type="term" value="F:DNA binding"/>
    <property type="evidence" value="ECO:0007669"/>
    <property type="project" value="UniProtKB-UniRule"/>
</dbReference>
<dbReference type="GO" id="GO:0005198">
    <property type="term" value="F:structural molecule activity"/>
    <property type="evidence" value="ECO:0007669"/>
    <property type="project" value="UniProtKB-UniRule"/>
</dbReference>
<dbReference type="GO" id="GO:0075521">
    <property type="term" value="P:microtubule-dependent intracellular transport of viral material towards nucleus"/>
    <property type="evidence" value="ECO:0007669"/>
    <property type="project" value="UniProtKB-UniRule"/>
</dbReference>
<dbReference type="GO" id="GO:0046718">
    <property type="term" value="P:symbiont entry into host cell"/>
    <property type="evidence" value="ECO:0007669"/>
    <property type="project" value="UniProtKB-KW"/>
</dbReference>
<dbReference type="GO" id="GO:0075732">
    <property type="term" value="P:viral penetration into host nucleus"/>
    <property type="evidence" value="ECO:0007669"/>
    <property type="project" value="UniProtKB-KW"/>
</dbReference>
<dbReference type="HAMAP" id="MF_04003">
    <property type="entry name" value="PPV_L2"/>
    <property type="match status" value="1"/>
</dbReference>
<dbReference type="InterPro" id="IPR000784">
    <property type="entry name" value="Late_L2"/>
</dbReference>
<dbReference type="Pfam" id="PF00513">
    <property type="entry name" value="Late_protein_L2"/>
    <property type="match status" value="1"/>
</dbReference>
<gene>
    <name evidence="1" type="primary">L2</name>
</gene>
<organismHost>
    <name type="scientific">Homo sapiens</name>
    <name type="common">Human</name>
    <dbReference type="NCBI Taxonomy" id="9606"/>
</organismHost>
<proteinExistence type="inferred from homology"/>
<name>VL2_HPV35</name>
<sequence length="469" mass="50531">MRHKRSTKRVKRASATQLYRTCKAAGTCPPDVIPKVEGNTVADQILKYGSMAVFFGGLGIGSGSGTGGRSGYVPLGTTPPTAATNIPIRPPVTVESIPLDTIGPLDSSIVSLVEETSFIESGAPVVTPRVPPTTGFTITTSTDTTPAILDVTSISTHDNPTFTDPSVLHPPTPAETSGHFVLSSSSISTHNYEEIPMDTFIVSTDSNNITNSTPIPGSRPTTRLGLYSKGTQQVKVVDPAFMTSPAKLITYDNPAYEGLNPDTTLQFEHEDISLAPDPDFMDIIALHRPALTSRKGTIRYSRVGNKRTMHTRSGKAIGARVHYYQDLSSITEDIELQPLQHVPSSLPHTTVSTSLNDGMFDIYAPIDTEEDIIFSASSNNTLYTTSNTAYVPSNTTIPLSSGYDIPITAGPDIVFNSNTITNTVLPVPTGPIYSIIADGGDFYLHPSYYLLKRRRKRIPYFFADVSVAV</sequence>
<protein>
    <recommendedName>
        <fullName evidence="1">Minor capsid protein L2</fullName>
    </recommendedName>
</protein>
<feature type="chain" id="PRO_0000133602" description="Minor capsid protein L2">
    <location>
        <begin position="1"/>
        <end position="469"/>
    </location>
</feature>
<feature type="short sequence motif" description="Nuclear localization signal" evidence="1">
    <location>
        <begin position="1"/>
        <end position="13"/>
    </location>
</feature>
<feature type="short sequence motif" description="Nuclear localization signal" evidence="1">
    <location>
        <begin position="450"/>
        <end position="458"/>
    </location>
</feature>
<feature type="disulfide bond" evidence="1">
    <location>
        <begin position="22"/>
        <end position="28"/>
    </location>
</feature>
<feature type="sequence conflict" description="In Ref. 2; AAA46971." evidence="2" ref="2">
    <original>T</original>
    <variation>S</variation>
    <location>
        <position position="423"/>
    </location>
</feature>
<feature type="sequence conflict" description="In Ref. 2; AAA46971." evidence="2" ref="2">
    <original>R</original>
    <variation>A</variation>
    <location>
        <position position="457"/>
    </location>
</feature>